<evidence type="ECO:0000250" key="1"/>
<evidence type="ECO:0000250" key="2">
    <source>
        <dbReference type="UniProtKB" id="P0C0S5"/>
    </source>
</evidence>
<evidence type="ECO:0000250" key="3">
    <source>
        <dbReference type="UniProtKB" id="P0C0S6"/>
    </source>
</evidence>
<evidence type="ECO:0000256" key="4">
    <source>
        <dbReference type="SAM" id="MobiDB-lite"/>
    </source>
</evidence>
<evidence type="ECO:0000305" key="5"/>
<evidence type="ECO:0000305" key="6">
    <source>
    </source>
</evidence>
<evidence type="ECO:0000305" key="7">
    <source>
    </source>
</evidence>
<protein>
    <recommendedName>
        <fullName>Histone H2A.Z</fullName>
        <shortName>H2A/z</shortName>
    </recommendedName>
</protein>
<feature type="initiator methionine" description="Removed" evidence="1">
    <location>
        <position position="1"/>
    </location>
</feature>
<feature type="chain" id="PRO_0000055302" description="Histone H2A.Z">
    <location>
        <begin position="2"/>
        <end position="128"/>
    </location>
</feature>
<feature type="region of interest" description="Disordered" evidence="4">
    <location>
        <begin position="1"/>
        <end position="25"/>
    </location>
</feature>
<feature type="region of interest" description="M6 cassette" evidence="1">
    <location>
        <begin position="89"/>
        <end position="100"/>
    </location>
</feature>
<feature type="compositionally biased region" description="Basic and acidic residues" evidence="4">
    <location>
        <begin position="1"/>
        <end position="12"/>
    </location>
</feature>
<feature type="modified residue" description="N6-acetyllysine" evidence="6">
    <location>
        <position position="5"/>
    </location>
</feature>
<feature type="modified residue" description="N6-methyllysine" evidence="2">
    <location>
        <position position="5"/>
    </location>
</feature>
<feature type="modified residue" description="N6-acetyllysine" evidence="6">
    <location>
        <position position="8"/>
    </location>
</feature>
<feature type="modified residue" description="N6-methyllysine" evidence="2">
    <location>
        <position position="8"/>
    </location>
</feature>
<feature type="modified residue" description="N6-acetyllysine; alternate" evidence="6">
    <location>
        <position position="12"/>
    </location>
</feature>
<feature type="modified residue" description="N6-lactoyllysine; alternate" evidence="2">
    <location>
        <position position="12"/>
    </location>
</feature>
<feature type="modified residue" description="N6-lactoyllysine" evidence="2">
    <location>
        <position position="14"/>
    </location>
</feature>
<feature type="modified residue" description="N6-lactoyllysine" evidence="2">
    <location>
        <position position="116"/>
    </location>
</feature>
<feature type="cross-link" description="Glycyl lysine isopeptide (Lys-Gly) (interchain with G-Cter in ubiquitin)" evidence="7">
    <location>
        <position position="122"/>
    </location>
</feature>
<name>H2AZ_CHICK</name>
<sequence>MAGGKAGKDSGKTKTKAVSRSQRAGLQFPVGRIHRHLKSRTTSHGRVGATAAVYSAAILEYLTAEVLELAGNASKDLKVKRITPRHLQLAIRGDEELDSLIKATIAGGGVIPHIHKSLIGKKGQQKTV</sequence>
<dbReference type="EMBL" id="AJ719448">
    <property type="protein sequence ID" value="CAG31107.1"/>
    <property type="molecule type" value="mRNA"/>
</dbReference>
<dbReference type="RefSeq" id="NP_001026545.1">
    <property type="nucleotide sequence ID" value="NM_001031374.1"/>
</dbReference>
<dbReference type="SMR" id="Q5ZMD6"/>
<dbReference type="BioGRID" id="686040">
    <property type="interactions" value="1"/>
</dbReference>
<dbReference type="FunCoup" id="Q5ZMD6">
    <property type="interactions" value="2669"/>
</dbReference>
<dbReference type="STRING" id="9031.ENSGALP00000028277"/>
<dbReference type="iPTMnet" id="Q5ZMD6"/>
<dbReference type="PaxDb" id="9031-ENSGALP00000028277"/>
<dbReference type="Ensembl" id="ENSGALT00010012764.1">
    <property type="protein sequence ID" value="ENSGALP00010007328.1"/>
    <property type="gene ID" value="ENSGALG00010005367.1"/>
</dbReference>
<dbReference type="GeneID" id="426361"/>
<dbReference type="KEGG" id="gga:426361"/>
<dbReference type="CTD" id="3015"/>
<dbReference type="VEuPathDB" id="HostDB:geneid_426361"/>
<dbReference type="eggNOG" id="KOG1757">
    <property type="taxonomic scope" value="Eukaryota"/>
</dbReference>
<dbReference type="GeneTree" id="ENSGT00900000140979"/>
<dbReference type="HOGENOM" id="CLU_062828_2_2_1"/>
<dbReference type="InParanoid" id="Q5ZMD6"/>
<dbReference type="OMA" id="PVGRIHT"/>
<dbReference type="OrthoDB" id="9421954at2759"/>
<dbReference type="PhylomeDB" id="Q5ZMD6"/>
<dbReference type="TreeFam" id="TF354232"/>
<dbReference type="PRO" id="PR:Q5ZMD6"/>
<dbReference type="Proteomes" id="UP000000539">
    <property type="component" value="Chromosome 4"/>
</dbReference>
<dbReference type="Bgee" id="ENSGALG00000014023">
    <property type="expression patterns" value="Expressed in spermatid and 14 other cell types or tissues"/>
</dbReference>
<dbReference type="GO" id="GO:0000786">
    <property type="term" value="C:nucleosome"/>
    <property type="evidence" value="ECO:0000318"/>
    <property type="project" value="GO_Central"/>
</dbReference>
<dbReference type="GO" id="GO:0005634">
    <property type="term" value="C:nucleus"/>
    <property type="evidence" value="ECO:0000318"/>
    <property type="project" value="GO_Central"/>
</dbReference>
<dbReference type="GO" id="GO:0003677">
    <property type="term" value="F:DNA binding"/>
    <property type="evidence" value="ECO:0007669"/>
    <property type="project" value="UniProtKB-KW"/>
</dbReference>
<dbReference type="GO" id="GO:0046982">
    <property type="term" value="F:protein heterodimerization activity"/>
    <property type="evidence" value="ECO:0007669"/>
    <property type="project" value="InterPro"/>
</dbReference>
<dbReference type="GO" id="GO:0030527">
    <property type="term" value="F:structural constituent of chromatin"/>
    <property type="evidence" value="ECO:0000318"/>
    <property type="project" value="GO_Central"/>
</dbReference>
<dbReference type="GO" id="GO:0031507">
    <property type="term" value="P:heterochromatin formation"/>
    <property type="evidence" value="ECO:0000318"/>
    <property type="project" value="GO_Central"/>
</dbReference>
<dbReference type="CDD" id="cd00074">
    <property type="entry name" value="HFD_H2A"/>
    <property type="match status" value="1"/>
</dbReference>
<dbReference type="FunFam" id="1.10.20.10:FF:000005">
    <property type="entry name" value="Histone H2A"/>
    <property type="match status" value="1"/>
</dbReference>
<dbReference type="Gene3D" id="1.10.20.10">
    <property type="entry name" value="Histone, subunit A"/>
    <property type="match status" value="1"/>
</dbReference>
<dbReference type="InterPro" id="IPR009072">
    <property type="entry name" value="Histone-fold"/>
</dbReference>
<dbReference type="InterPro" id="IPR002119">
    <property type="entry name" value="Histone_H2A"/>
</dbReference>
<dbReference type="InterPro" id="IPR007125">
    <property type="entry name" value="Histone_H2A/H2B/H3"/>
</dbReference>
<dbReference type="InterPro" id="IPR032454">
    <property type="entry name" value="Histone_H2A_C"/>
</dbReference>
<dbReference type="InterPro" id="IPR032458">
    <property type="entry name" value="Histone_H2A_CS"/>
</dbReference>
<dbReference type="PANTHER" id="PTHR23430">
    <property type="entry name" value="HISTONE H2A"/>
    <property type="match status" value="1"/>
</dbReference>
<dbReference type="Pfam" id="PF00125">
    <property type="entry name" value="Histone"/>
    <property type="match status" value="1"/>
</dbReference>
<dbReference type="Pfam" id="PF16211">
    <property type="entry name" value="Histone_H2A_C"/>
    <property type="match status" value="1"/>
</dbReference>
<dbReference type="PRINTS" id="PR00620">
    <property type="entry name" value="HISTONEH2A"/>
</dbReference>
<dbReference type="SMART" id="SM00414">
    <property type="entry name" value="H2A"/>
    <property type="match status" value="1"/>
</dbReference>
<dbReference type="SUPFAM" id="SSF47113">
    <property type="entry name" value="Histone-fold"/>
    <property type="match status" value="1"/>
</dbReference>
<dbReference type="PROSITE" id="PS00046">
    <property type="entry name" value="HISTONE_H2A"/>
    <property type="match status" value="1"/>
</dbReference>
<gene>
    <name type="primary">H2AFZ</name>
    <name type="ORF">RCJMB04_2h11</name>
</gene>
<reference key="1">
    <citation type="journal article" date="2005" name="Genome Biol.">
        <title>Full-length cDNAs from chicken bursal lymphocytes to facilitate gene function analysis.</title>
        <authorList>
            <person name="Caldwell R.B."/>
            <person name="Kierzek A.M."/>
            <person name="Arakawa H."/>
            <person name="Bezzubov Y."/>
            <person name="Zaim J."/>
            <person name="Fiedler P."/>
            <person name="Kutter S."/>
            <person name="Blagodatski A."/>
            <person name="Kostovska D."/>
            <person name="Koter M."/>
            <person name="Plachy J."/>
            <person name="Carninci P."/>
            <person name="Hayashizaki Y."/>
            <person name="Buerstedde J.-M."/>
        </authorList>
    </citation>
    <scope>NUCLEOTIDE SEQUENCE [LARGE SCALE MRNA]</scope>
    <source>
        <strain>CB</strain>
        <tissue>Bursa of Fabricius</tissue>
    </source>
</reference>
<reference key="2">
    <citation type="journal article" date="1993" name="Biochem. J.">
        <title>Effects of histone acetylation, ubiquitination and variants on nucleosome stability.</title>
        <authorList>
            <person name="Li W."/>
            <person name="Nagaraja S."/>
            <person name="Delcuve G.P."/>
            <person name="Hendzel M.J."/>
            <person name="Davie J.R."/>
        </authorList>
    </citation>
    <scope>UBIQUITINATION</scope>
</reference>
<reference key="3">
    <citation type="journal article" date="2005" name="Nucleic Acids Res.">
        <title>The replacement histone H2A.Z in a hyperacetylated form is a feature of active genes in the chicken.</title>
        <authorList>
            <person name="Bruce K."/>
            <person name="Myers F.A."/>
            <person name="Mantouvalou E."/>
            <person name="Lefevre P."/>
            <person name="Greaves I."/>
            <person name="Bonifer C."/>
            <person name="Tremethick D.J."/>
            <person name="Thorne A.W."/>
            <person name="Crane-Robinson C."/>
        </authorList>
    </citation>
    <scope>ACETYLATION AT LYS-5; LYS-8 AND LYS-12</scope>
</reference>
<reference key="4">
    <citation type="journal article" date="2005" name="Proc. Natl. Acad. Sci. U.S.A.">
        <title>Protein identification using sequential ion/ion reactions and tandem mass spectrometry.</title>
        <authorList>
            <person name="Coon J.J."/>
            <person name="Ueberheide B."/>
            <person name="Syka J.E.P."/>
            <person name="Dryhurst D.D."/>
            <person name="Ausio J."/>
            <person name="Shabanowitz J."/>
            <person name="Hunt D.F."/>
        </authorList>
    </citation>
    <scope>IDENTIFICATION BY MASS SPECTROMETRY</scope>
</reference>
<organism>
    <name type="scientific">Gallus gallus</name>
    <name type="common">Chicken</name>
    <dbReference type="NCBI Taxonomy" id="9031"/>
    <lineage>
        <taxon>Eukaryota</taxon>
        <taxon>Metazoa</taxon>
        <taxon>Chordata</taxon>
        <taxon>Craniata</taxon>
        <taxon>Vertebrata</taxon>
        <taxon>Euteleostomi</taxon>
        <taxon>Archelosauria</taxon>
        <taxon>Archosauria</taxon>
        <taxon>Dinosauria</taxon>
        <taxon>Saurischia</taxon>
        <taxon>Theropoda</taxon>
        <taxon>Coelurosauria</taxon>
        <taxon>Aves</taxon>
        <taxon>Neognathae</taxon>
        <taxon>Galloanserae</taxon>
        <taxon>Galliformes</taxon>
        <taxon>Phasianidae</taxon>
        <taxon>Phasianinae</taxon>
        <taxon>Gallus</taxon>
    </lineage>
</organism>
<comment type="function">
    <text evidence="2 3">Variant histone H2A which replaces conventional H2A in a subset of nucleosomes. Nucleosomes wrap and compact DNA into chromatin, limiting DNA accessibility to the cellular machineries which require DNA as a template. Histones thereby play a central role in transcription regulation, DNA repair, DNA replication and chromosomal stability. DNA accessibility is regulated via a complex set of post-translational modifications of histones, also called histone code, and nucleosome remodeling (By similarity).</text>
</comment>
<comment type="subunit">
    <text evidence="1">The nucleosome is a histone octamer containing two molecules each of H2A, H2B, H3 and H4 assembled in one H3-H4 heterotetramer and two H2A-H2B heterodimers. The octamer wraps approximately 147 bp of DNA. H2A or its variant H2AZ1 forms a heterodimer with H2B (By similarity).</text>
</comment>
<comment type="subcellular location">
    <subcellularLocation>
        <location evidence="1">Nucleus</location>
    </subcellularLocation>
    <subcellularLocation>
        <location evidence="1">Chromosome</location>
    </subcellularLocation>
</comment>
<comment type="PTM">
    <text evidence="2">Monoubiquitination of Lys-122 gives a specific tag for epigenetic transcriptional repression.</text>
</comment>
<comment type="PTM">
    <text evidence="3">Acetylated on Lys-5, Lys-8 and Lys-12 during interphase. Acetylation disappears at mitosis (By similarity).</text>
</comment>
<comment type="PTM">
    <text evidence="2">Monomethylated on Lys-5 and Lys-8 by SETD6. SETD6 predominantly methylates Lys-8, lys-5 being a possible secondary site.</text>
</comment>
<comment type="similarity">
    <text evidence="5">Belongs to the histone H2A family.</text>
</comment>
<keyword id="KW-0007">Acetylation</keyword>
<keyword id="KW-0158">Chromosome</keyword>
<keyword id="KW-0238">DNA-binding</keyword>
<keyword id="KW-1017">Isopeptide bond</keyword>
<keyword id="KW-0488">Methylation</keyword>
<keyword id="KW-0544">Nucleosome core</keyword>
<keyword id="KW-0539">Nucleus</keyword>
<keyword id="KW-1185">Reference proteome</keyword>
<keyword id="KW-0832">Ubl conjugation</keyword>
<accession>Q5ZMD6</accession>
<proteinExistence type="evidence at protein level"/>